<reference key="1">
    <citation type="journal article" date="2007" name="Science">
        <title>The Calyptogena magnifica chemoautotrophic symbiont genome.</title>
        <authorList>
            <person name="Newton I.L.G."/>
            <person name="Woyke T."/>
            <person name="Auchtung T.A."/>
            <person name="Dilly G.F."/>
            <person name="Dutton R.J."/>
            <person name="Fisher M.C."/>
            <person name="Fontanez K.M."/>
            <person name="Lau E."/>
            <person name="Stewart F.J."/>
            <person name="Richardson P.M."/>
            <person name="Barry K.W."/>
            <person name="Saunders E."/>
            <person name="Detter J.C."/>
            <person name="Wu D."/>
            <person name="Eisen J.A."/>
            <person name="Cavanaugh C.M."/>
        </authorList>
    </citation>
    <scope>NUCLEOTIDE SEQUENCE [LARGE SCALE GENOMIC DNA]</scope>
</reference>
<accession>A1AV91</accession>
<protein>
    <recommendedName>
        <fullName evidence="1">Aspartate carbamoyltransferase catalytic subunit</fullName>
        <ecNumber evidence="1">2.1.3.2</ecNumber>
    </recommendedName>
    <alternativeName>
        <fullName evidence="1">Aspartate transcarbamylase</fullName>
        <shortName evidence="1">ATCase</shortName>
    </alternativeName>
</protein>
<sequence>MKKDLISNHIQLDDSGKLIHLLGLEGLSKQYLIHILDTADSLIDVSGNLKKSKALDDIFVANLFFEPSTRTRNTFEIAAMRSSANVINVDLANSALKKNEDLLNTMRTLKAMQIDMFVIRHKQNGLPHHVVQHLKDVSILNAGDGINAHPTQALLDMLSIRQHKKTFENLSVAIVGDITHSRVAHSDIQALKTLGTTDIRLIAPKVLQYNLAPCSVVKHFDDIEPGLKNCDVVIVLRLQKERMIEADIPNEQEYFDNFGLTPKRLALAKPDAIVMHPGPTNRGVEIDSNVADGNQSIILQQVTNGIAVRMAVMQILVNKS</sequence>
<keyword id="KW-0665">Pyrimidine biosynthesis</keyword>
<keyword id="KW-0808">Transferase</keyword>
<dbReference type="EC" id="2.1.3.2" evidence="1"/>
<dbReference type="EMBL" id="CP000488">
    <property type="protein sequence ID" value="ABL01848.1"/>
    <property type="molecule type" value="Genomic_DNA"/>
</dbReference>
<dbReference type="RefSeq" id="WP_011737474.1">
    <property type="nucleotide sequence ID" value="NC_008610.1"/>
</dbReference>
<dbReference type="SMR" id="A1AV91"/>
<dbReference type="STRING" id="413404.Rmag_0045"/>
<dbReference type="KEGG" id="rma:Rmag_0045"/>
<dbReference type="eggNOG" id="COG0540">
    <property type="taxonomic scope" value="Bacteria"/>
</dbReference>
<dbReference type="HOGENOM" id="CLU_043846_2_0_6"/>
<dbReference type="OrthoDB" id="9802587at2"/>
<dbReference type="UniPathway" id="UPA00070">
    <property type="reaction ID" value="UER00116"/>
</dbReference>
<dbReference type="Proteomes" id="UP000002587">
    <property type="component" value="Chromosome"/>
</dbReference>
<dbReference type="GO" id="GO:0005829">
    <property type="term" value="C:cytosol"/>
    <property type="evidence" value="ECO:0007669"/>
    <property type="project" value="TreeGrafter"/>
</dbReference>
<dbReference type="GO" id="GO:0016597">
    <property type="term" value="F:amino acid binding"/>
    <property type="evidence" value="ECO:0007669"/>
    <property type="project" value="InterPro"/>
</dbReference>
<dbReference type="GO" id="GO:0004070">
    <property type="term" value="F:aspartate carbamoyltransferase activity"/>
    <property type="evidence" value="ECO:0007669"/>
    <property type="project" value="UniProtKB-UniRule"/>
</dbReference>
<dbReference type="GO" id="GO:0006207">
    <property type="term" value="P:'de novo' pyrimidine nucleobase biosynthetic process"/>
    <property type="evidence" value="ECO:0007669"/>
    <property type="project" value="InterPro"/>
</dbReference>
<dbReference type="GO" id="GO:0044205">
    <property type="term" value="P:'de novo' UMP biosynthetic process"/>
    <property type="evidence" value="ECO:0007669"/>
    <property type="project" value="UniProtKB-UniRule"/>
</dbReference>
<dbReference type="GO" id="GO:0006520">
    <property type="term" value="P:amino acid metabolic process"/>
    <property type="evidence" value="ECO:0007669"/>
    <property type="project" value="InterPro"/>
</dbReference>
<dbReference type="Gene3D" id="3.40.50.1370">
    <property type="entry name" value="Aspartate/ornithine carbamoyltransferase"/>
    <property type="match status" value="2"/>
</dbReference>
<dbReference type="HAMAP" id="MF_00001">
    <property type="entry name" value="Asp_carb_tr"/>
    <property type="match status" value="1"/>
</dbReference>
<dbReference type="InterPro" id="IPR006132">
    <property type="entry name" value="Asp/Orn_carbamoyltranf_P-bd"/>
</dbReference>
<dbReference type="InterPro" id="IPR006130">
    <property type="entry name" value="Asp/Orn_carbamoylTrfase"/>
</dbReference>
<dbReference type="InterPro" id="IPR036901">
    <property type="entry name" value="Asp/Orn_carbamoylTrfase_sf"/>
</dbReference>
<dbReference type="InterPro" id="IPR002082">
    <property type="entry name" value="Asp_carbamoyltransf"/>
</dbReference>
<dbReference type="InterPro" id="IPR006131">
    <property type="entry name" value="Asp_carbamoyltransf_Asp/Orn-bd"/>
</dbReference>
<dbReference type="NCBIfam" id="TIGR00670">
    <property type="entry name" value="asp_carb_tr"/>
    <property type="match status" value="1"/>
</dbReference>
<dbReference type="NCBIfam" id="NF002032">
    <property type="entry name" value="PRK00856.1"/>
    <property type="match status" value="1"/>
</dbReference>
<dbReference type="PANTHER" id="PTHR45753:SF6">
    <property type="entry name" value="ASPARTATE CARBAMOYLTRANSFERASE"/>
    <property type="match status" value="1"/>
</dbReference>
<dbReference type="PANTHER" id="PTHR45753">
    <property type="entry name" value="ORNITHINE CARBAMOYLTRANSFERASE, MITOCHONDRIAL"/>
    <property type="match status" value="1"/>
</dbReference>
<dbReference type="Pfam" id="PF00185">
    <property type="entry name" value="OTCace"/>
    <property type="match status" value="1"/>
</dbReference>
<dbReference type="Pfam" id="PF02729">
    <property type="entry name" value="OTCace_N"/>
    <property type="match status" value="1"/>
</dbReference>
<dbReference type="PRINTS" id="PR00100">
    <property type="entry name" value="AOTCASE"/>
</dbReference>
<dbReference type="PRINTS" id="PR00101">
    <property type="entry name" value="ATCASE"/>
</dbReference>
<dbReference type="SUPFAM" id="SSF53671">
    <property type="entry name" value="Aspartate/ornithine carbamoyltransferase"/>
    <property type="match status" value="1"/>
</dbReference>
<dbReference type="PROSITE" id="PS00097">
    <property type="entry name" value="CARBAMOYLTRANSFERASE"/>
    <property type="match status" value="1"/>
</dbReference>
<gene>
    <name evidence="1" type="primary">pyrB</name>
    <name type="ordered locus">Rmag_0045</name>
</gene>
<organism>
    <name type="scientific">Ruthia magnifica subsp. Calyptogena magnifica</name>
    <dbReference type="NCBI Taxonomy" id="413404"/>
    <lineage>
        <taxon>Bacteria</taxon>
        <taxon>Pseudomonadati</taxon>
        <taxon>Pseudomonadota</taxon>
        <taxon>Gammaproteobacteria</taxon>
        <taxon>Candidatus Pseudothioglobaceae</taxon>
        <taxon>Candidatus Ruthturnera</taxon>
    </lineage>
</organism>
<proteinExistence type="inferred from homology"/>
<feature type="chain" id="PRO_0000321155" description="Aspartate carbamoyltransferase catalytic subunit">
    <location>
        <begin position="1"/>
        <end position="320"/>
    </location>
</feature>
<feature type="binding site" evidence="1">
    <location>
        <position position="70"/>
    </location>
    <ligand>
        <name>carbamoyl phosphate</name>
        <dbReference type="ChEBI" id="CHEBI:58228"/>
    </ligand>
</feature>
<feature type="binding site" evidence="1">
    <location>
        <position position="71"/>
    </location>
    <ligand>
        <name>carbamoyl phosphate</name>
        <dbReference type="ChEBI" id="CHEBI:58228"/>
    </ligand>
</feature>
<feature type="binding site" evidence="1">
    <location>
        <position position="98"/>
    </location>
    <ligand>
        <name>L-aspartate</name>
        <dbReference type="ChEBI" id="CHEBI:29991"/>
    </ligand>
</feature>
<feature type="binding site" evidence="1">
    <location>
        <position position="120"/>
    </location>
    <ligand>
        <name>carbamoyl phosphate</name>
        <dbReference type="ChEBI" id="CHEBI:58228"/>
    </ligand>
</feature>
<feature type="binding site" evidence="1">
    <location>
        <position position="149"/>
    </location>
    <ligand>
        <name>carbamoyl phosphate</name>
        <dbReference type="ChEBI" id="CHEBI:58228"/>
    </ligand>
</feature>
<feature type="binding site" evidence="1">
    <location>
        <position position="152"/>
    </location>
    <ligand>
        <name>carbamoyl phosphate</name>
        <dbReference type="ChEBI" id="CHEBI:58228"/>
    </ligand>
</feature>
<feature type="binding site" evidence="1">
    <location>
        <position position="182"/>
    </location>
    <ligand>
        <name>L-aspartate</name>
        <dbReference type="ChEBI" id="CHEBI:29991"/>
    </ligand>
</feature>
<feature type="binding site" evidence="1">
    <location>
        <position position="237"/>
    </location>
    <ligand>
        <name>L-aspartate</name>
        <dbReference type="ChEBI" id="CHEBI:29991"/>
    </ligand>
</feature>
<feature type="binding site" evidence="1">
    <location>
        <position position="278"/>
    </location>
    <ligand>
        <name>carbamoyl phosphate</name>
        <dbReference type="ChEBI" id="CHEBI:58228"/>
    </ligand>
</feature>
<feature type="binding site" evidence="1">
    <location>
        <position position="279"/>
    </location>
    <ligand>
        <name>carbamoyl phosphate</name>
        <dbReference type="ChEBI" id="CHEBI:58228"/>
    </ligand>
</feature>
<name>PYRB_RUTMC</name>
<evidence type="ECO:0000255" key="1">
    <source>
        <dbReference type="HAMAP-Rule" id="MF_00001"/>
    </source>
</evidence>
<comment type="function">
    <text evidence="1">Catalyzes the condensation of carbamoyl phosphate and aspartate to form carbamoyl aspartate and inorganic phosphate, the committed step in the de novo pyrimidine nucleotide biosynthesis pathway.</text>
</comment>
<comment type="catalytic activity">
    <reaction evidence="1">
        <text>carbamoyl phosphate + L-aspartate = N-carbamoyl-L-aspartate + phosphate + H(+)</text>
        <dbReference type="Rhea" id="RHEA:20013"/>
        <dbReference type="ChEBI" id="CHEBI:15378"/>
        <dbReference type="ChEBI" id="CHEBI:29991"/>
        <dbReference type="ChEBI" id="CHEBI:32814"/>
        <dbReference type="ChEBI" id="CHEBI:43474"/>
        <dbReference type="ChEBI" id="CHEBI:58228"/>
        <dbReference type="EC" id="2.1.3.2"/>
    </reaction>
</comment>
<comment type="pathway">
    <text evidence="1">Pyrimidine metabolism; UMP biosynthesis via de novo pathway; (S)-dihydroorotate from bicarbonate: step 2/3.</text>
</comment>
<comment type="subunit">
    <text evidence="1">Heterododecamer (2C3:3R2) of six catalytic PyrB chains organized as two trimers (C3), and six regulatory PyrI chains organized as three dimers (R2).</text>
</comment>
<comment type="similarity">
    <text evidence="1">Belongs to the aspartate/ornithine carbamoyltransferase superfamily. ATCase family.</text>
</comment>